<comment type="function">
    <text evidence="1">Exhibits a very high intrinsic GTPase hydrolysis rate. Involved in the addition of a carboxymethylaminomethyl (cmnm) group at the wobble position (U34) of certain tRNAs, forming tRNA-cmnm(5)s(2)U34.</text>
</comment>
<comment type="cofactor">
    <cofactor evidence="1">
        <name>K(+)</name>
        <dbReference type="ChEBI" id="CHEBI:29103"/>
    </cofactor>
    <text evidence="1">Binds 1 potassium ion per subunit.</text>
</comment>
<comment type="subunit">
    <text evidence="1">Homodimer. Heterotetramer of two MnmE and two MnmG subunits.</text>
</comment>
<comment type="subcellular location">
    <subcellularLocation>
        <location evidence="1">Cytoplasm</location>
    </subcellularLocation>
</comment>
<comment type="similarity">
    <text evidence="1">Belongs to the TRAFAC class TrmE-Era-EngA-EngB-Septin-like GTPase superfamily. TrmE GTPase family.</text>
</comment>
<name>MNME_SYNS9</name>
<reference key="1">
    <citation type="submission" date="2005-08" db="EMBL/GenBank/DDBJ databases">
        <title>Complete sequence of Synechococcus sp. CC9902.</title>
        <authorList>
            <person name="Copeland A."/>
            <person name="Lucas S."/>
            <person name="Lapidus A."/>
            <person name="Barry K."/>
            <person name="Detter J.C."/>
            <person name="Glavina T."/>
            <person name="Hammon N."/>
            <person name="Israni S."/>
            <person name="Pitluck S."/>
            <person name="Martinez M."/>
            <person name="Schmutz J."/>
            <person name="Larimer F."/>
            <person name="Land M."/>
            <person name="Kyrpides N."/>
            <person name="Ivanova N."/>
            <person name="Richardson P."/>
        </authorList>
    </citation>
    <scope>NUCLEOTIDE SEQUENCE [LARGE SCALE GENOMIC DNA]</scope>
    <source>
        <strain>CC9902</strain>
    </source>
</reference>
<protein>
    <recommendedName>
        <fullName evidence="1">tRNA modification GTPase MnmE</fullName>
        <ecNumber evidence="1">3.6.-.-</ecNumber>
    </recommendedName>
</protein>
<dbReference type="EC" id="3.6.-.-" evidence="1"/>
<dbReference type="EMBL" id="CP000097">
    <property type="protein sequence ID" value="ABB27094.1"/>
    <property type="molecule type" value="Genomic_DNA"/>
</dbReference>
<dbReference type="RefSeq" id="WP_011360876.1">
    <property type="nucleotide sequence ID" value="NC_007513.1"/>
</dbReference>
<dbReference type="SMR" id="Q3AVY3"/>
<dbReference type="STRING" id="316279.Syncc9902_2136"/>
<dbReference type="KEGG" id="sye:Syncc9902_2136"/>
<dbReference type="eggNOG" id="COG0486">
    <property type="taxonomic scope" value="Bacteria"/>
</dbReference>
<dbReference type="HOGENOM" id="CLU_019624_4_1_3"/>
<dbReference type="OrthoDB" id="9805918at2"/>
<dbReference type="Proteomes" id="UP000002712">
    <property type="component" value="Chromosome"/>
</dbReference>
<dbReference type="GO" id="GO:0005829">
    <property type="term" value="C:cytosol"/>
    <property type="evidence" value="ECO:0007669"/>
    <property type="project" value="TreeGrafter"/>
</dbReference>
<dbReference type="GO" id="GO:0005525">
    <property type="term" value="F:GTP binding"/>
    <property type="evidence" value="ECO:0007669"/>
    <property type="project" value="UniProtKB-UniRule"/>
</dbReference>
<dbReference type="GO" id="GO:0003924">
    <property type="term" value="F:GTPase activity"/>
    <property type="evidence" value="ECO:0007669"/>
    <property type="project" value="UniProtKB-UniRule"/>
</dbReference>
<dbReference type="GO" id="GO:0046872">
    <property type="term" value="F:metal ion binding"/>
    <property type="evidence" value="ECO:0007669"/>
    <property type="project" value="UniProtKB-KW"/>
</dbReference>
<dbReference type="GO" id="GO:0030488">
    <property type="term" value="P:tRNA methylation"/>
    <property type="evidence" value="ECO:0007669"/>
    <property type="project" value="TreeGrafter"/>
</dbReference>
<dbReference type="GO" id="GO:0002098">
    <property type="term" value="P:tRNA wobble uridine modification"/>
    <property type="evidence" value="ECO:0007669"/>
    <property type="project" value="TreeGrafter"/>
</dbReference>
<dbReference type="CDD" id="cd04164">
    <property type="entry name" value="trmE"/>
    <property type="match status" value="1"/>
</dbReference>
<dbReference type="CDD" id="cd14858">
    <property type="entry name" value="TrmE_N"/>
    <property type="match status" value="1"/>
</dbReference>
<dbReference type="Gene3D" id="3.40.50.300">
    <property type="entry name" value="P-loop containing nucleotide triphosphate hydrolases"/>
    <property type="match status" value="1"/>
</dbReference>
<dbReference type="Gene3D" id="3.30.1360.120">
    <property type="entry name" value="Probable tRNA modification gtpase trme, domain 1"/>
    <property type="match status" value="1"/>
</dbReference>
<dbReference type="Gene3D" id="1.20.120.430">
    <property type="entry name" value="tRNA modification GTPase MnmE domain 2"/>
    <property type="match status" value="1"/>
</dbReference>
<dbReference type="HAMAP" id="MF_00379">
    <property type="entry name" value="GTPase_MnmE"/>
    <property type="match status" value="1"/>
</dbReference>
<dbReference type="InterPro" id="IPR031168">
    <property type="entry name" value="G_TrmE"/>
</dbReference>
<dbReference type="InterPro" id="IPR006073">
    <property type="entry name" value="GTP-bd"/>
</dbReference>
<dbReference type="InterPro" id="IPR018948">
    <property type="entry name" value="GTP-bd_TrmE_N"/>
</dbReference>
<dbReference type="InterPro" id="IPR004520">
    <property type="entry name" value="GTPase_MnmE"/>
</dbReference>
<dbReference type="InterPro" id="IPR027368">
    <property type="entry name" value="MnmE_dom2"/>
</dbReference>
<dbReference type="InterPro" id="IPR025867">
    <property type="entry name" value="MnmE_helical"/>
</dbReference>
<dbReference type="InterPro" id="IPR027417">
    <property type="entry name" value="P-loop_NTPase"/>
</dbReference>
<dbReference type="InterPro" id="IPR005225">
    <property type="entry name" value="Small_GTP-bd"/>
</dbReference>
<dbReference type="InterPro" id="IPR027266">
    <property type="entry name" value="TrmE/GcvT_dom1"/>
</dbReference>
<dbReference type="NCBIfam" id="TIGR00450">
    <property type="entry name" value="mnmE_trmE_thdF"/>
    <property type="match status" value="1"/>
</dbReference>
<dbReference type="NCBIfam" id="TIGR00231">
    <property type="entry name" value="small_GTP"/>
    <property type="match status" value="1"/>
</dbReference>
<dbReference type="PANTHER" id="PTHR42714">
    <property type="entry name" value="TRNA MODIFICATION GTPASE GTPBP3"/>
    <property type="match status" value="1"/>
</dbReference>
<dbReference type="PANTHER" id="PTHR42714:SF2">
    <property type="entry name" value="TRNA MODIFICATION GTPASE GTPBP3, MITOCHONDRIAL"/>
    <property type="match status" value="1"/>
</dbReference>
<dbReference type="Pfam" id="PF01926">
    <property type="entry name" value="MMR_HSR1"/>
    <property type="match status" value="1"/>
</dbReference>
<dbReference type="Pfam" id="PF12631">
    <property type="entry name" value="MnmE_helical"/>
    <property type="match status" value="1"/>
</dbReference>
<dbReference type="Pfam" id="PF10396">
    <property type="entry name" value="TrmE_N"/>
    <property type="match status" value="1"/>
</dbReference>
<dbReference type="PRINTS" id="PR00449">
    <property type="entry name" value="RASTRNSFRMNG"/>
</dbReference>
<dbReference type="SUPFAM" id="SSF52540">
    <property type="entry name" value="P-loop containing nucleoside triphosphate hydrolases"/>
    <property type="match status" value="1"/>
</dbReference>
<dbReference type="SUPFAM" id="SSF116878">
    <property type="entry name" value="TrmE connector domain"/>
    <property type="match status" value="1"/>
</dbReference>
<dbReference type="PROSITE" id="PS51709">
    <property type="entry name" value="G_TRME"/>
    <property type="match status" value="1"/>
</dbReference>
<accession>Q3AVY3</accession>
<gene>
    <name evidence="1" type="primary">mnmE</name>
    <name evidence="1" type="synonym">trmE</name>
    <name type="ordered locus">Syncc9902_2136</name>
</gene>
<organism>
    <name type="scientific">Synechococcus sp. (strain CC9902)</name>
    <dbReference type="NCBI Taxonomy" id="316279"/>
    <lineage>
        <taxon>Bacteria</taxon>
        <taxon>Bacillati</taxon>
        <taxon>Cyanobacteriota</taxon>
        <taxon>Cyanophyceae</taxon>
        <taxon>Synechococcales</taxon>
        <taxon>Synechococcaceae</taxon>
        <taxon>Synechococcus</taxon>
    </lineage>
</organism>
<proteinExistence type="inferred from homology"/>
<keyword id="KW-0963">Cytoplasm</keyword>
<keyword id="KW-0342">GTP-binding</keyword>
<keyword id="KW-0378">Hydrolase</keyword>
<keyword id="KW-0460">Magnesium</keyword>
<keyword id="KW-0479">Metal-binding</keyword>
<keyword id="KW-0547">Nucleotide-binding</keyword>
<keyword id="KW-0630">Potassium</keyword>
<keyword id="KW-1185">Reference proteome</keyword>
<keyword id="KW-0819">tRNA processing</keyword>
<feature type="chain" id="PRO_1000048898" description="tRNA modification GTPase MnmE">
    <location>
        <begin position="1"/>
        <end position="451"/>
    </location>
</feature>
<feature type="domain" description="TrmE-type G">
    <location>
        <begin position="222"/>
        <end position="374"/>
    </location>
</feature>
<feature type="binding site" evidence="1">
    <location>
        <position position="25"/>
    </location>
    <ligand>
        <name>(6S)-5-formyl-5,6,7,8-tetrahydrofolate</name>
        <dbReference type="ChEBI" id="CHEBI:57457"/>
    </ligand>
</feature>
<feature type="binding site" evidence="1">
    <location>
        <position position="87"/>
    </location>
    <ligand>
        <name>(6S)-5-formyl-5,6,7,8-tetrahydrofolate</name>
        <dbReference type="ChEBI" id="CHEBI:57457"/>
    </ligand>
</feature>
<feature type="binding site" evidence="1">
    <location>
        <position position="127"/>
    </location>
    <ligand>
        <name>(6S)-5-formyl-5,6,7,8-tetrahydrofolate</name>
        <dbReference type="ChEBI" id="CHEBI:57457"/>
    </ligand>
</feature>
<feature type="binding site" evidence="1">
    <location>
        <begin position="232"/>
        <end position="237"/>
    </location>
    <ligand>
        <name>GTP</name>
        <dbReference type="ChEBI" id="CHEBI:37565"/>
    </ligand>
</feature>
<feature type="binding site" evidence="1">
    <location>
        <position position="232"/>
    </location>
    <ligand>
        <name>K(+)</name>
        <dbReference type="ChEBI" id="CHEBI:29103"/>
    </ligand>
</feature>
<feature type="binding site" evidence="1">
    <location>
        <position position="236"/>
    </location>
    <ligand>
        <name>Mg(2+)</name>
        <dbReference type="ChEBI" id="CHEBI:18420"/>
    </ligand>
</feature>
<feature type="binding site" evidence="1">
    <location>
        <begin position="251"/>
        <end position="257"/>
    </location>
    <ligand>
        <name>GTP</name>
        <dbReference type="ChEBI" id="CHEBI:37565"/>
    </ligand>
</feature>
<feature type="binding site" evidence="1">
    <location>
        <position position="251"/>
    </location>
    <ligand>
        <name>K(+)</name>
        <dbReference type="ChEBI" id="CHEBI:29103"/>
    </ligand>
</feature>
<feature type="binding site" evidence="1">
    <location>
        <position position="253"/>
    </location>
    <ligand>
        <name>K(+)</name>
        <dbReference type="ChEBI" id="CHEBI:29103"/>
    </ligand>
</feature>
<feature type="binding site" evidence="1">
    <location>
        <position position="256"/>
    </location>
    <ligand>
        <name>K(+)</name>
        <dbReference type="ChEBI" id="CHEBI:29103"/>
    </ligand>
</feature>
<feature type="binding site" evidence="1">
    <location>
        <position position="257"/>
    </location>
    <ligand>
        <name>Mg(2+)</name>
        <dbReference type="ChEBI" id="CHEBI:18420"/>
    </ligand>
</feature>
<feature type="binding site" evidence="1">
    <location>
        <begin position="276"/>
        <end position="279"/>
    </location>
    <ligand>
        <name>GTP</name>
        <dbReference type="ChEBI" id="CHEBI:37565"/>
    </ligand>
</feature>
<feature type="binding site" evidence="1">
    <location>
        <position position="451"/>
    </location>
    <ligand>
        <name>(6S)-5-formyl-5,6,7,8-tetrahydrofolate</name>
        <dbReference type="ChEBI" id="CHEBI:57457"/>
    </ligand>
</feature>
<evidence type="ECO:0000255" key="1">
    <source>
        <dbReference type="HAMAP-Rule" id="MF_00379"/>
    </source>
</evidence>
<sequence>MPPLDTIAAVATAVAPGQGGIAVIRLSGPVAEQVAQAVVQCPGHQEWGSHRILYGHVMAVDGQRRLDEVLLLLMRAPRSFTGEDVVEIHCHGGVMAVQQVLERVLEHPGVRRALPGEFSQRAVLNGRLDLTQAEAVSELVSARSRRAADLAMAGLDGGIQARITVLRERLLDQLTELEARVDFEDDLPPLDGTALLNELQAVRVELLALVADGERGDALRHGLRVALVGRPNVGKSSLLNRLSRRERAIVTELPGTTRDLLESEIVLDGVPITLMDTAGIRATNDAVEQLGIARSEEALISADVVVLIVDGHAGWTETDAQLLARIPNDVPRVVVANKSDLDGPPLPGLVDVQFSALNGAGEDAFVQVLLERCGAGDAAGIVLSLNTRQRDLASVAAAALERSHEVAQQQLPWDFWTIDLREAIRGLGEITGEELTEAVLERVFSRFCIGK</sequence>